<reference key="1">
    <citation type="submission" date="2009-06" db="EMBL/GenBank/DDBJ databases">
        <title>Complete sequence of chromosome of Geopacillus sp. WCH70.</title>
        <authorList>
            <consortium name="US DOE Joint Genome Institute"/>
            <person name="Lucas S."/>
            <person name="Copeland A."/>
            <person name="Lapidus A."/>
            <person name="Glavina del Rio T."/>
            <person name="Dalin E."/>
            <person name="Tice H."/>
            <person name="Bruce D."/>
            <person name="Goodwin L."/>
            <person name="Pitluck S."/>
            <person name="Chertkov O."/>
            <person name="Brettin T."/>
            <person name="Detter J.C."/>
            <person name="Han C."/>
            <person name="Larimer F."/>
            <person name="Land M."/>
            <person name="Hauser L."/>
            <person name="Kyrpides N."/>
            <person name="Mikhailova N."/>
            <person name="Brumm P."/>
            <person name="Mead D.A."/>
            <person name="Richardson P."/>
        </authorList>
    </citation>
    <scope>NUCLEOTIDE SEQUENCE [LARGE SCALE GENOMIC DNA]</scope>
    <source>
        <strain>WCH70</strain>
    </source>
</reference>
<accession>C5D465</accession>
<sequence>MNKGQRHIKIREIIMSHDIETQDELVDMLKKAGFNVTQATVSRDIKEMQLVKVPMANGRYKYSLPSDQRFNPVQKLKRALMDVFIKLDGAGNLLVLKTLPGNAHAIGVLLDNLDWNEIVGTICGDDTCLIICRTAEDAEKVSKQLLEML</sequence>
<feature type="chain" id="PRO_1000203717" description="Arginine repressor">
    <location>
        <begin position="1"/>
        <end position="149"/>
    </location>
</feature>
<dbReference type="EMBL" id="CP001638">
    <property type="protein sequence ID" value="ACS25021.1"/>
    <property type="molecule type" value="Genomic_DNA"/>
</dbReference>
<dbReference type="SMR" id="C5D465"/>
<dbReference type="STRING" id="471223.GWCH70_2317"/>
<dbReference type="KEGG" id="gwc:GWCH70_2317"/>
<dbReference type="eggNOG" id="COG1438">
    <property type="taxonomic scope" value="Bacteria"/>
</dbReference>
<dbReference type="HOGENOM" id="CLU_097103_3_0_9"/>
<dbReference type="OrthoDB" id="9807089at2"/>
<dbReference type="UniPathway" id="UPA00068"/>
<dbReference type="GO" id="GO:0005737">
    <property type="term" value="C:cytoplasm"/>
    <property type="evidence" value="ECO:0007669"/>
    <property type="project" value="UniProtKB-SubCell"/>
</dbReference>
<dbReference type="GO" id="GO:0034618">
    <property type="term" value="F:arginine binding"/>
    <property type="evidence" value="ECO:0007669"/>
    <property type="project" value="InterPro"/>
</dbReference>
<dbReference type="GO" id="GO:0003677">
    <property type="term" value="F:DNA binding"/>
    <property type="evidence" value="ECO:0007669"/>
    <property type="project" value="UniProtKB-KW"/>
</dbReference>
<dbReference type="GO" id="GO:0003700">
    <property type="term" value="F:DNA-binding transcription factor activity"/>
    <property type="evidence" value="ECO:0007669"/>
    <property type="project" value="UniProtKB-UniRule"/>
</dbReference>
<dbReference type="GO" id="GO:0006526">
    <property type="term" value="P:L-arginine biosynthetic process"/>
    <property type="evidence" value="ECO:0007669"/>
    <property type="project" value="UniProtKB-UniPathway"/>
</dbReference>
<dbReference type="GO" id="GO:0051259">
    <property type="term" value="P:protein complex oligomerization"/>
    <property type="evidence" value="ECO:0007669"/>
    <property type="project" value="InterPro"/>
</dbReference>
<dbReference type="GO" id="GO:1900079">
    <property type="term" value="P:regulation of arginine biosynthetic process"/>
    <property type="evidence" value="ECO:0007669"/>
    <property type="project" value="UniProtKB-UniRule"/>
</dbReference>
<dbReference type="FunFam" id="3.30.1360.40:FF:000006">
    <property type="entry name" value="Arginine repressor"/>
    <property type="match status" value="1"/>
</dbReference>
<dbReference type="Gene3D" id="3.30.1360.40">
    <property type="match status" value="1"/>
</dbReference>
<dbReference type="Gene3D" id="1.10.10.10">
    <property type="entry name" value="Winged helix-like DNA-binding domain superfamily/Winged helix DNA-binding domain"/>
    <property type="match status" value="1"/>
</dbReference>
<dbReference type="HAMAP" id="MF_00173">
    <property type="entry name" value="Arg_repressor"/>
    <property type="match status" value="1"/>
</dbReference>
<dbReference type="InterPro" id="IPR001669">
    <property type="entry name" value="Arg_repress"/>
</dbReference>
<dbReference type="InterPro" id="IPR020899">
    <property type="entry name" value="Arg_repress_C"/>
</dbReference>
<dbReference type="InterPro" id="IPR036251">
    <property type="entry name" value="Arg_repress_C_sf"/>
</dbReference>
<dbReference type="InterPro" id="IPR020900">
    <property type="entry name" value="Arg_repress_DNA-bd"/>
</dbReference>
<dbReference type="InterPro" id="IPR036388">
    <property type="entry name" value="WH-like_DNA-bd_sf"/>
</dbReference>
<dbReference type="InterPro" id="IPR036390">
    <property type="entry name" value="WH_DNA-bd_sf"/>
</dbReference>
<dbReference type="NCBIfam" id="TIGR01529">
    <property type="entry name" value="argR_whole"/>
    <property type="match status" value="1"/>
</dbReference>
<dbReference type="NCBIfam" id="NF003281">
    <property type="entry name" value="PRK04280.1"/>
    <property type="match status" value="1"/>
</dbReference>
<dbReference type="PANTHER" id="PTHR34471">
    <property type="entry name" value="ARGININE REPRESSOR"/>
    <property type="match status" value="1"/>
</dbReference>
<dbReference type="PANTHER" id="PTHR34471:SF1">
    <property type="entry name" value="ARGININE REPRESSOR"/>
    <property type="match status" value="1"/>
</dbReference>
<dbReference type="Pfam" id="PF01316">
    <property type="entry name" value="Arg_repressor"/>
    <property type="match status" value="1"/>
</dbReference>
<dbReference type="Pfam" id="PF02863">
    <property type="entry name" value="Arg_repressor_C"/>
    <property type="match status" value="1"/>
</dbReference>
<dbReference type="PRINTS" id="PR01467">
    <property type="entry name" value="ARGREPRESSOR"/>
</dbReference>
<dbReference type="SUPFAM" id="SSF55252">
    <property type="entry name" value="C-terminal domain of arginine repressor"/>
    <property type="match status" value="1"/>
</dbReference>
<dbReference type="SUPFAM" id="SSF46785">
    <property type="entry name" value="Winged helix' DNA-binding domain"/>
    <property type="match status" value="1"/>
</dbReference>
<name>ARGR_GEOSW</name>
<evidence type="ECO:0000255" key="1">
    <source>
        <dbReference type="HAMAP-Rule" id="MF_00173"/>
    </source>
</evidence>
<keyword id="KW-0028">Amino-acid biosynthesis</keyword>
<keyword id="KW-0055">Arginine biosynthesis</keyword>
<keyword id="KW-0963">Cytoplasm</keyword>
<keyword id="KW-0238">DNA-binding</keyword>
<keyword id="KW-0678">Repressor</keyword>
<keyword id="KW-0804">Transcription</keyword>
<keyword id="KW-0805">Transcription regulation</keyword>
<proteinExistence type="inferred from homology"/>
<protein>
    <recommendedName>
        <fullName evidence="1">Arginine repressor</fullName>
    </recommendedName>
</protein>
<gene>
    <name evidence="1" type="primary">argR</name>
    <name type="ordered locus">GWCH70_2317</name>
</gene>
<organism>
    <name type="scientific">Geobacillus sp. (strain WCH70)</name>
    <dbReference type="NCBI Taxonomy" id="471223"/>
    <lineage>
        <taxon>Bacteria</taxon>
        <taxon>Bacillati</taxon>
        <taxon>Bacillota</taxon>
        <taxon>Bacilli</taxon>
        <taxon>Bacillales</taxon>
        <taxon>Anoxybacillaceae</taxon>
        <taxon>Geobacillus</taxon>
    </lineage>
</organism>
<comment type="function">
    <text evidence="1">Regulates arginine biosynthesis genes.</text>
</comment>
<comment type="pathway">
    <text>Amino-acid biosynthesis; L-arginine biosynthesis [regulation].</text>
</comment>
<comment type="subcellular location">
    <subcellularLocation>
        <location evidence="1">Cytoplasm</location>
    </subcellularLocation>
</comment>
<comment type="similarity">
    <text evidence="1">Belongs to the ArgR family.</text>
</comment>